<evidence type="ECO:0000255" key="1">
    <source>
        <dbReference type="HAMAP-Rule" id="MF_00284"/>
    </source>
</evidence>
<name>SYFB_THEON</name>
<reference key="1">
    <citation type="journal article" date="2008" name="J. Bacteriol.">
        <title>The complete genome sequence of Thermococcus onnurineus NA1 reveals a mixed heterotrophic and carboxydotrophic metabolism.</title>
        <authorList>
            <person name="Lee H.S."/>
            <person name="Kang S.G."/>
            <person name="Bae S.S."/>
            <person name="Lim J.K."/>
            <person name="Cho Y."/>
            <person name="Kim Y.J."/>
            <person name="Jeon J.H."/>
            <person name="Cha S.-S."/>
            <person name="Kwon K.K."/>
            <person name="Kim H.-T."/>
            <person name="Park C.-J."/>
            <person name="Lee H.-W."/>
            <person name="Kim S.I."/>
            <person name="Chun J."/>
            <person name="Colwell R.R."/>
            <person name="Kim S.-J."/>
            <person name="Lee J.-H."/>
        </authorList>
    </citation>
    <scope>NUCLEOTIDE SEQUENCE [LARGE SCALE GENOMIC DNA]</scope>
    <source>
        <strain>NA1</strain>
    </source>
</reference>
<keyword id="KW-0030">Aminoacyl-tRNA synthetase</keyword>
<keyword id="KW-0067">ATP-binding</keyword>
<keyword id="KW-0963">Cytoplasm</keyword>
<keyword id="KW-0436">Ligase</keyword>
<keyword id="KW-0460">Magnesium</keyword>
<keyword id="KW-0479">Metal-binding</keyword>
<keyword id="KW-0547">Nucleotide-binding</keyword>
<keyword id="KW-0648">Protein biosynthesis</keyword>
<protein>
    <recommendedName>
        <fullName evidence="1">Phenylalanine--tRNA ligase beta subunit</fullName>
        <ecNumber evidence="1">6.1.1.20</ecNumber>
    </recommendedName>
    <alternativeName>
        <fullName evidence="1">Phenylalanyl-tRNA synthetase beta subunit</fullName>
        <shortName evidence="1">PheRS</shortName>
    </alternativeName>
</protein>
<accession>B6YTJ3</accession>
<proteinExistence type="inferred from homology"/>
<gene>
    <name evidence="1" type="primary">pheT</name>
    <name type="ordered locus">TON_0395</name>
</gene>
<feature type="chain" id="PRO_1000114946" description="Phenylalanine--tRNA ligase beta subunit">
    <location>
        <begin position="1"/>
        <end position="572"/>
    </location>
</feature>
<feature type="domain" description="B5" evidence="1">
    <location>
        <begin position="278"/>
        <end position="353"/>
    </location>
</feature>
<feature type="binding site" evidence="1">
    <location>
        <position position="331"/>
    </location>
    <ligand>
        <name>Mg(2+)</name>
        <dbReference type="ChEBI" id="CHEBI:18420"/>
        <note>shared with alpha subunit</note>
    </ligand>
</feature>
<feature type="binding site" evidence="1">
    <location>
        <position position="337"/>
    </location>
    <ligand>
        <name>Mg(2+)</name>
        <dbReference type="ChEBI" id="CHEBI:18420"/>
        <note>shared with alpha subunit</note>
    </ligand>
</feature>
<feature type="binding site" evidence="1">
    <location>
        <position position="340"/>
    </location>
    <ligand>
        <name>Mg(2+)</name>
        <dbReference type="ChEBI" id="CHEBI:18420"/>
        <note>shared with alpha subunit</note>
    </ligand>
</feature>
<feature type="binding site" evidence="1">
    <location>
        <position position="341"/>
    </location>
    <ligand>
        <name>Mg(2+)</name>
        <dbReference type="ChEBI" id="CHEBI:18420"/>
        <note>shared with alpha subunit</note>
    </ligand>
</feature>
<comment type="catalytic activity">
    <reaction evidence="1">
        <text>tRNA(Phe) + L-phenylalanine + ATP = L-phenylalanyl-tRNA(Phe) + AMP + diphosphate + H(+)</text>
        <dbReference type="Rhea" id="RHEA:19413"/>
        <dbReference type="Rhea" id="RHEA-COMP:9668"/>
        <dbReference type="Rhea" id="RHEA-COMP:9699"/>
        <dbReference type="ChEBI" id="CHEBI:15378"/>
        <dbReference type="ChEBI" id="CHEBI:30616"/>
        <dbReference type="ChEBI" id="CHEBI:33019"/>
        <dbReference type="ChEBI" id="CHEBI:58095"/>
        <dbReference type="ChEBI" id="CHEBI:78442"/>
        <dbReference type="ChEBI" id="CHEBI:78531"/>
        <dbReference type="ChEBI" id="CHEBI:456215"/>
        <dbReference type="EC" id="6.1.1.20"/>
    </reaction>
</comment>
<comment type="cofactor">
    <cofactor evidence="1">
        <name>Mg(2+)</name>
        <dbReference type="ChEBI" id="CHEBI:18420"/>
    </cofactor>
</comment>
<comment type="subunit">
    <text evidence="1">Tetramer of two alpha and two beta subunits.</text>
</comment>
<comment type="subcellular location">
    <subcellularLocation>
        <location evidence="1">Cytoplasm</location>
    </subcellularLocation>
</comment>
<comment type="similarity">
    <text evidence="1">Belongs to the phenylalanyl-tRNA synthetase beta subunit family. Type 2 subfamily.</text>
</comment>
<sequence>MPKFDVSKADLERLVGKSFTVEEWEDLFLYAKCELDDVWEENGQIYFKADSKDTNRPDLWSAEGIARQIRWALGMAKGLPRYEVEKSDVVVYVDEKLKDIRPYGVYAIVEGLSLDDEALKQMINLQEKVALTFGRRRREVAIGIFDFDKVKPPIYYRAAEKTEKFVPLGFEEKMSLEEILEKHEKGKEYGHLIKDKPYYPLLVDSEGNVLSMPPIINSELTGRVTTETRNVFVDVTGWDLNKIMLALNVVVTALAERGGKIKSVKVVYGDFEIETPNLTPKEFEVEFEYIRRLAGIDLSDEEIKELLERMFYEVELENGKAKLKYPAFRDDIMHARDVLEDVLIAYGYNEIKPEEPKLAVQGRGDKFVEFEDTVRELMVGYGLQEVMTFNLTNREAQYTKMNLDFGEHPFEEYGHHPPARLVEIENPISPKWSALRAWLIPSLMEFLSQNTHEEYPQRIFEVGKTTLINENKETKTVSESKLAVAIAHPRVTFTEVKEILDSVMHHLGLEYELKEIEHNSFIPGRVGKIIVNGQEVGIIGEIHPKVLENWGIEMPVAAFEVFLRPLYREPYL</sequence>
<dbReference type="EC" id="6.1.1.20" evidence="1"/>
<dbReference type="EMBL" id="CP000855">
    <property type="protein sequence ID" value="ACJ15880.1"/>
    <property type="molecule type" value="Genomic_DNA"/>
</dbReference>
<dbReference type="RefSeq" id="WP_012571352.1">
    <property type="nucleotide sequence ID" value="NC_011529.1"/>
</dbReference>
<dbReference type="SMR" id="B6YTJ3"/>
<dbReference type="STRING" id="523850.TON_0395"/>
<dbReference type="GeneID" id="7016690"/>
<dbReference type="KEGG" id="ton:TON_0395"/>
<dbReference type="PATRIC" id="fig|523850.10.peg.399"/>
<dbReference type="eggNOG" id="arCOG00412">
    <property type="taxonomic scope" value="Archaea"/>
</dbReference>
<dbReference type="HOGENOM" id="CLU_020279_3_0_2"/>
<dbReference type="OrthoDB" id="10073at2157"/>
<dbReference type="Proteomes" id="UP000002727">
    <property type="component" value="Chromosome"/>
</dbReference>
<dbReference type="GO" id="GO:0009328">
    <property type="term" value="C:phenylalanine-tRNA ligase complex"/>
    <property type="evidence" value="ECO:0007669"/>
    <property type="project" value="TreeGrafter"/>
</dbReference>
<dbReference type="GO" id="GO:0005524">
    <property type="term" value="F:ATP binding"/>
    <property type="evidence" value="ECO:0007669"/>
    <property type="project" value="UniProtKB-UniRule"/>
</dbReference>
<dbReference type="GO" id="GO:0000287">
    <property type="term" value="F:magnesium ion binding"/>
    <property type="evidence" value="ECO:0007669"/>
    <property type="project" value="InterPro"/>
</dbReference>
<dbReference type="GO" id="GO:0004826">
    <property type="term" value="F:phenylalanine-tRNA ligase activity"/>
    <property type="evidence" value="ECO:0007669"/>
    <property type="project" value="UniProtKB-UniRule"/>
</dbReference>
<dbReference type="GO" id="GO:0003723">
    <property type="term" value="F:RNA binding"/>
    <property type="evidence" value="ECO:0007669"/>
    <property type="project" value="InterPro"/>
</dbReference>
<dbReference type="GO" id="GO:0006432">
    <property type="term" value="P:phenylalanyl-tRNA aminoacylation"/>
    <property type="evidence" value="ECO:0007669"/>
    <property type="project" value="UniProtKB-UniRule"/>
</dbReference>
<dbReference type="CDD" id="cd00769">
    <property type="entry name" value="PheRS_beta_core"/>
    <property type="match status" value="1"/>
</dbReference>
<dbReference type="FunFam" id="3.30.56.10:FF:000011">
    <property type="entry name" value="Phenylalanine--tRNA ligase beta subunit"/>
    <property type="match status" value="1"/>
</dbReference>
<dbReference type="FunFam" id="3.30.930.10:FF:000132">
    <property type="entry name" value="Phenylalanine--tRNA ligase beta subunit"/>
    <property type="match status" value="1"/>
</dbReference>
<dbReference type="FunFam" id="3.50.40.10:FF:000003">
    <property type="entry name" value="Phenylalanine--tRNA ligase beta subunit"/>
    <property type="match status" value="1"/>
</dbReference>
<dbReference type="Gene3D" id="3.30.56.10">
    <property type="match status" value="2"/>
</dbReference>
<dbReference type="Gene3D" id="3.30.930.10">
    <property type="entry name" value="Bira Bifunctional Protein, Domain 2"/>
    <property type="match status" value="1"/>
</dbReference>
<dbReference type="Gene3D" id="3.50.40.10">
    <property type="entry name" value="Phenylalanyl-trna Synthetase, Chain B, domain 3"/>
    <property type="match status" value="1"/>
</dbReference>
<dbReference type="HAMAP" id="MF_00284">
    <property type="entry name" value="Phe_tRNA_synth_beta2"/>
    <property type="match status" value="1"/>
</dbReference>
<dbReference type="InterPro" id="IPR045864">
    <property type="entry name" value="aa-tRNA-synth_II/BPL/LPL"/>
</dbReference>
<dbReference type="InterPro" id="IPR005146">
    <property type="entry name" value="B3/B4_tRNA-bd"/>
</dbReference>
<dbReference type="InterPro" id="IPR009061">
    <property type="entry name" value="DNA-bd_dom_put_sf"/>
</dbReference>
<dbReference type="InterPro" id="IPR045060">
    <property type="entry name" value="Phe-tRNA-ligase_IIc_bsu"/>
</dbReference>
<dbReference type="InterPro" id="IPR004531">
    <property type="entry name" value="Phe-tRNA-synth_IIc_bsu_arc_euk"/>
</dbReference>
<dbReference type="InterPro" id="IPR020825">
    <property type="entry name" value="Phe-tRNA_synthase-like_B3/B4"/>
</dbReference>
<dbReference type="InterPro" id="IPR022918">
    <property type="entry name" value="Phe_tRNA_ligase_beta2_arc"/>
</dbReference>
<dbReference type="InterPro" id="IPR041616">
    <property type="entry name" value="PheRS_beta_core"/>
</dbReference>
<dbReference type="InterPro" id="IPR005147">
    <property type="entry name" value="tRNA_synthase_B5-dom"/>
</dbReference>
<dbReference type="NCBIfam" id="TIGR00471">
    <property type="entry name" value="pheT_arch"/>
    <property type="match status" value="1"/>
</dbReference>
<dbReference type="PANTHER" id="PTHR10947:SF0">
    <property type="entry name" value="PHENYLALANINE--TRNA LIGASE BETA SUBUNIT"/>
    <property type="match status" value="1"/>
</dbReference>
<dbReference type="PANTHER" id="PTHR10947">
    <property type="entry name" value="PHENYLALANYL-TRNA SYNTHETASE BETA CHAIN AND LEUCINE-RICH REPEAT-CONTAINING PROTEIN 47"/>
    <property type="match status" value="1"/>
</dbReference>
<dbReference type="Pfam" id="PF03483">
    <property type="entry name" value="B3_4"/>
    <property type="match status" value="1"/>
</dbReference>
<dbReference type="Pfam" id="PF03484">
    <property type="entry name" value="B5"/>
    <property type="match status" value="1"/>
</dbReference>
<dbReference type="Pfam" id="PF17759">
    <property type="entry name" value="tRNA_synthFbeta"/>
    <property type="match status" value="1"/>
</dbReference>
<dbReference type="SMART" id="SM00873">
    <property type="entry name" value="B3_4"/>
    <property type="match status" value="1"/>
</dbReference>
<dbReference type="SMART" id="SM00874">
    <property type="entry name" value="B5"/>
    <property type="match status" value="1"/>
</dbReference>
<dbReference type="SUPFAM" id="SSF55681">
    <property type="entry name" value="Class II aaRS and biotin synthetases"/>
    <property type="match status" value="1"/>
</dbReference>
<dbReference type="SUPFAM" id="SSF56037">
    <property type="entry name" value="PheT/TilS domain"/>
    <property type="match status" value="1"/>
</dbReference>
<dbReference type="SUPFAM" id="SSF46955">
    <property type="entry name" value="Putative DNA-binding domain"/>
    <property type="match status" value="2"/>
</dbReference>
<dbReference type="PROSITE" id="PS51483">
    <property type="entry name" value="B5"/>
    <property type="match status" value="1"/>
</dbReference>
<organism>
    <name type="scientific">Thermococcus onnurineus (strain NA1)</name>
    <dbReference type="NCBI Taxonomy" id="523850"/>
    <lineage>
        <taxon>Archaea</taxon>
        <taxon>Methanobacteriati</taxon>
        <taxon>Methanobacteriota</taxon>
        <taxon>Thermococci</taxon>
        <taxon>Thermococcales</taxon>
        <taxon>Thermococcaceae</taxon>
        <taxon>Thermococcus</taxon>
    </lineage>
</organism>